<dbReference type="EC" id="3.1.-.-" evidence="1"/>
<dbReference type="EMBL" id="X17403">
    <property type="protein sequence ID" value="CAA35334.1"/>
    <property type="molecule type" value="Genomic_DNA"/>
</dbReference>
<dbReference type="EMBL" id="M62615">
    <property type="protein sequence ID" value="AAA45905.1"/>
    <property type="molecule type" value="Genomic_DNA"/>
</dbReference>
<dbReference type="EMBL" id="BK000394">
    <property type="protein sequence ID" value="DAA00195.2"/>
    <property type="molecule type" value="Genomic_DNA"/>
</dbReference>
<dbReference type="PIR" id="S09863">
    <property type="entry name" value="QQBEJ6"/>
</dbReference>
<dbReference type="SMR" id="P16789"/>
<dbReference type="Proteomes" id="UP000008991">
    <property type="component" value="Segment"/>
</dbReference>
<dbReference type="Proteomes" id="UP000008992">
    <property type="component" value="Segment"/>
</dbReference>
<dbReference type="GO" id="GO:0030430">
    <property type="term" value="C:host cell cytoplasm"/>
    <property type="evidence" value="ECO:0007669"/>
    <property type="project" value="UniProtKB-SubCell"/>
</dbReference>
<dbReference type="GO" id="GO:0042025">
    <property type="term" value="C:host cell nucleus"/>
    <property type="evidence" value="ECO:0007669"/>
    <property type="project" value="UniProtKB-SubCell"/>
</dbReference>
<dbReference type="GO" id="GO:0003677">
    <property type="term" value="F:DNA binding"/>
    <property type="evidence" value="ECO:0007669"/>
    <property type="project" value="InterPro"/>
</dbReference>
<dbReference type="GO" id="GO:0004519">
    <property type="term" value="F:endonuclease activity"/>
    <property type="evidence" value="ECO:0007669"/>
    <property type="project" value="UniProtKB-KW"/>
</dbReference>
<dbReference type="GO" id="GO:0004527">
    <property type="term" value="F:exonuclease activity"/>
    <property type="evidence" value="ECO:0007669"/>
    <property type="project" value="UniProtKB-KW"/>
</dbReference>
<dbReference type="HAMAP" id="MF_04009">
    <property type="entry name" value="HSV_AN"/>
    <property type="match status" value="1"/>
</dbReference>
<dbReference type="InterPro" id="IPR001616">
    <property type="entry name" value="Herpes_alk_exo"/>
</dbReference>
<dbReference type="InterPro" id="IPR011335">
    <property type="entry name" value="Restrct_endonuc-II-like"/>
</dbReference>
<dbReference type="InterPro" id="IPR034720">
    <property type="entry name" value="Viral_alk_exo"/>
</dbReference>
<dbReference type="Pfam" id="PF01771">
    <property type="entry name" value="Viral_alk_exo"/>
    <property type="match status" value="1"/>
</dbReference>
<dbReference type="PRINTS" id="PR00924">
    <property type="entry name" value="ALKEXNUCLASE"/>
</dbReference>
<dbReference type="SUPFAM" id="SSF52980">
    <property type="entry name" value="Restriction endonuclease-like"/>
    <property type="match status" value="1"/>
</dbReference>
<keyword id="KW-0255">Endonuclease</keyword>
<keyword id="KW-0269">Exonuclease</keyword>
<keyword id="KW-1035">Host cytoplasm</keyword>
<keyword id="KW-1048">Host nucleus</keyword>
<keyword id="KW-0945">Host-virus interaction</keyword>
<keyword id="KW-0378">Hydrolase</keyword>
<keyword id="KW-0540">Nuclease</keyword>
<keyword id="KW-1185">Reference proteome</keyword>
<feature type="chain" id="PRO_0000115701" description="Alkaline nuclease">
    <location>
        <begin position="1"/>
        <end position="584"/>
    </location>
</feature>
<feature type="region of interest" description="Disordered" evidence="2">
    <location>
        <begin position="409"/>
        <end position="430"/>
    </location>
</feature>
<feature type="site" description="Required for function" evidence="1">
    <location>
        <position position="216"/>
    </location>
</feature>
<feature type="site" description="Required for function" evidence="1">
    <location>
        <position position="254"/>
    </location>
</feature>
<feature type="site" description="Required for function" evidence="1">
    <location>
        <position position="278"/>
    </location>
</feature>
<feature type="site" description="Required for function" evidence="1">
    <location>
        <position position="280"/>
    </location>
</feature>
<accession>P16789</accession>
<accession>Q7M6J3</accession>
<name>AN_HCMVA</name>
<evidence type="ECO:0000255" key="1">
    <source>
        <dbReference type="HAMAP-Rule" id="MF_04009"/>
    </source>
</evidence>
<evidence type="ECO:0000256" key="2">
    <source>
        <dbReference type="SAM" id="MobiDB-lite"/>
    </source>
</evidence>
<evidence type="ECO:0000269" key="3">
    <source>
    </source>
</evidence>
<evidence type="ECO:0000269" key="4">
    <source>
    </source>
</evidence>
<proteinExistence type="inferred from homology"/>
<comment type="function">
    <text evidence="1 3 4">Plays a role in processing non linear or branched viral DNA intermediates in order to promote the production of mature packaged unit-length linear progeny viral DNA molecules. Exhibits endonuclease and exonuclease activities and accepts both double-stranded and single-stranded DNA as substrate. Exonuclease digestion of DNA is in the 5'-&gt; 3' direction and the products are 5'-monophosphate nucleosides. Additionally, forms a recombinase with the major DNA-binding protein, which displays strand exchange activity.</text>
</comment>
<comment type="subunit">
    <text evidence="1">Interacts with major DNA-binding protein; this interaction increases the nuclease processivity of the alkaline exonuclease.</text>
</comment>
<comment type="subcellular location">
    <subcellularLocation>
        <location evidence="1">Host nucleus</location>
    </subcellularLocation>
    <subcellularLocation>
        <location evidence="1">Host cytoplasm</location>
    </subcellularLocation>
</comment>
<comment type="similarity">
    <text evidence="1">Belongs to the herpesviridae alkaline nuclease family.</text>
</comment>
<sequence>MWGVSSLDYDDDEELTRLLAVWDDEPLSLFLMNTFLLHQEGFRNLPFTVLRLSYAYRIFAKMLRAHGTPVAEDFMTRVAALARDEGLRDILGQRHAAEASRAEIAEALERVAERCDDRHGGSDDYVWLSRLLDLAPNYRQVELFQLLEKESRGQSRNSVWHLLRMDTVSATKFYEAFVSGCLPGAAAADGSGGGGSHYTGSRAGVSPGIQFGIKHEGLVKTLVECYVMHGREPVRDGLGLLIDPTSGLLGASMDLCFGVLKQGSGRTLLVEPCARVYEIKCRYKYLRKKEDPFVQNVLRRHDAAAVASLLQSHPVPGVEFRGERETPSAREFLLSHDAALFRATLKRARPLKPPEPLREYLADLLYLNKAECSEVIVFDAKHLSDDNSDGDATITINASLGLAAGDAAGGGADHHLRGSPGDSPPPIPFEDENTPELLGRLNVYEVARFSLPAFVNPRHQYYFQMLIQQYVLSQYYIKKHPDPERIDFRDLPTVYLVSAIFREREESELGCELLAGGRVFHCDHIPLLLIVTPVVFDPQFTRHAVSTVLDRWSRDLSRKTNLPIWVPNSANEYVVSSVPRPVSP</sequence>
<organism>
    <name type="scientific">Human cytomegalovirus (strain AD169)</name>
    <name type="common">HHV-5</name>
    <name type="synonym">Human herpesvirus 5</name>
    <dbReference type="NCBI Taxonomy" id="10360"/>
    <lineage>
        <taxon>Viruses</taxon>
        <taxon>Duplodnaviria</taxon>
        <taxon>Heunggongvirae</taxon>
        <taxon>Peploviricota</taxon>
        <taxon>Herviviricetes</taxon>
        <taxon>Herpesvirales</taxon>
        <taxon>Orthoherpesviridae</taxon>
        <taxon>Betaherpesvirinae</taxon>
        <taxon>Cytomegalovirus</taxon>
        <taxon>Cytomegalovirus humanbeta5</taxon>
        <taxon>Human cytomegalovirus</taxon>
    </lineage>
</organism>
<reference key="1">
    <citation type="journal article" date="1990" name="Curr. Top. Microbiol. Immunol.">
        <title>Analysis of the protein-coding content of the sequence of human cytomegalovirus strain AD169.</title>
        <authorList>
            <person name="Chee M.S."/>
            <person name="Bankier A.T."/>
            <person name="Beck S."/>
            <person name="Bohni R."/>
            <person name="Brown C.M."/>
            <person name="Cerny R."/>
            <person name="Horsnell T."/>
            <person name="Hutchison C.A. III"/>
            <person name="Kouzarides T."/>
            <person name="Martignetti J.A."/>
            <person name="Preddie E."/>
            <person name="Satchwell S.C."/>
            <person name="Tomlinson P."/>
            <person name="Weston K.M."/>
            <person name="Barrell B.G."/>
        </authorList>
    </citation>
    <scope>NUCLEOTIDE SEQUENCE [LARGE SCALE GENOMIC DNA]</scope>
</reference>
<reference key="2">
    <citation type="journal article" date="1989" name="J. Virol.">
        <title>Analysis of a region of the human cytomegalovirus (AD169) genome coding for a 25-kilodalton virion protein.</title>
        <authorList>
            <person name="Martinez J."/>
            <person name="Lahijani R.S."/>
            <person name="St Jeor S.C."/>
        </authorList>
    </citation>
    <scope>NUCLEOTIDE SEQUENCE [GENOMIC DNA] OF 465-584</scope>
</reference>
<reference key="3">
    <citation type="journal article" date="1991" name="J. Virol.">
        <title>Characterization of a human cytomegalovirus 1.6-kilobase late mRNA and identification of its putative protein product.</title>
        <authorList>
            <person name="Lahijani R.S."/>
            <person name="Otteson E.W."/>
            <person name="Adlish J.D."/>
            <person name="St Jeor S.C."/>
        </authorList>
    </citation>
    <scope>NUCLEOTIDE SEQUENCE [GENOMIC DNA] OF 465-584</scope>
</reference>
<reference key="4">
    <citation type="journal article" date="2003" name="J. Gen. Virol.">
        <title>The human cytomegalovirus genome revisited: comparison with the chimpanzee cytomegalovirus genome.</title>
        <authorList>
            <person name="Davison A.J."/>
            <person name="Dolan A."/>
            <person name="Akter P."/>
            <person name="Addison C."/>
            <person name="Dargan D.J."/>
            <person name="Alcendor D.J."/>
            <person name="McGeoch D.J."/>
            <person name="Hayward G.S."/>
        </authorList>
    </citation>
    <scope>GENOME REANNOTATION</scope>
</reference>
<reference key="5">
    <citation type="journal article" date="2003" name="J. Gen. Virol.">
        <authorList>
            <person name="Davison A.J."/>
            <person name="Dolan A."/>
            <person name="Akter P."/>
            <person name="Addison C."/>
            <person name="Dargan D.J."/>
            <person name="Alcendor D.J."/>
            <person name="McGeoch D.J."/>
            <person name="Hayward G.S."/>
        </authorList>
    </citation>
    <scope>ERRATUM OF PUBMED:12533697</scope>
</reference>
<reference key="6">
    <citation type="submission" date="2009-05" db="EMBL/GenBank/DDBJ databases">
        <authorList>
            <person name="Davison A.J."/>
        </authorList>
    </citation>
    <scope>SEQUENCE REVISION TO 407</scope>
</reference>
<reference key="7">
    <citation type="journal article" date="1995" name="J. Virol.">
        <title>The human cytomegalovirus UL98 gene transcription unit overlaps with the pp28 true late gene (UL99) and encodes a 58-kilodalton early protein.</title>
        <authorList>
            <person name="Adam B.L."/>
            <person name="Jervey T.Y."/>
            <person name="Kohler C.P."/>
            <person name="Wright G.L. Jr."/>
            <person name="Nelson J.A."/>
            <person name="Stenberg R.M."/>
        </authorList>
    </citation>
    <scope>EARLY PROTEIN</scope>
</reference>
<reference key="8">
    <citation type="journal article" date="1997" name="J. Gen. Virol.">
        <title>The human cytomegalovirus UL98 gene encodes the conserved herpesvirus alkaline nuclease.</title>
        <authorList>
            <person name="Sheaffer A.K."/>
            <person name="Weinheimer S.P."/>
            <person name="Tenney D.J."/>
        </authorList>
    </citation>
    <scope>FUNCTION</scope>
</reference>
<reference key="9">
    <citation type="journal article" date="1998" name="Virology">
        <title>Functional conservations of the alkaline nuclease of herpes simplex type 1 and human cytomegalovirus.</title>
        <authorList>
            <person name="Gao M."/>
            <person name="Robertson B.J."/>
            <person name="McCann P.J."/>
            <person name="O'Boyle D.R."/>
            <person name="Weller S.K."/>
            <person name="Newcomb W.W."/>
            <person name="Brown J.C."/>
            <person name="Weinheimer S.P."/>
        </authorList>
    </citation>
    <scope>FUNCTION</scope>
</reference>
<protein>
    <recommendedName>
        <fullName evidence="1">Alkaline nuclease</fullName>
        <ecNumber evidence="1">3.1.-.-</ecNumber>
    </recommendedName>
</protein>
<organismHost>
    <name type="scientific">Homo sapiens</name>
    <name type="common">Human</name>
    <dbReference type="NCBI Taxonomy" id="9606"/>
</organismHost>
<gene>
    <name type="primary">UL98</name>
</gene>